<protein>
    <recommendedName>
        <fullName evidence="5">Protein GAMETE CELL DEFECTIVE 1, mitochondrial</fullName>
        <shortName evidence="5">OsGCD1</shortName>
    </recommendedName>
</protein>
<proteinExistence type="inferred from homology"/>
<gene>
    <name evidence="5" type="primary">GCD1</name>
    <name evidence="6" type="ORF">OsI_04101</name>
</gene>
<keyword id="KW-0217">Developmental protein</keyword>
<keyword id="KW-0496">Mitochondrion</keyword>
<keyword id="KW-1185">Reference proteome</keyword>
<keyword id="KW-0809">Transit peptide</keyword>
<name>GCD1_ORYSI</name>
<evidence type="ECO:0000250" key="1">
    <source>
        <dbReference type="UniProtKB" id="Q8S2G4"/>
    </source>
</evidence>
<evidence type="ECO:0000250" key="2">
    <source>
        <dbReference type="UniProtKB" id="Q9LVA9"/>
    </source>
</evidence>
<evidence type="ECO:0000255" key="3"/>
<evidence type="ECO:0000256" key="4">
    <source>
        <dbReference type="SAM" id="MobiDB-lite"/>
    </source>
</evidence>
<evidence type="ECO:0000305" key="5"/>
<evidence type="ECO:0000312" key="6">
    <source>
        <dbReference type="EMBL" id="EAY76168.1"/>
    </source>
</evidence>
<sequence>MLALRKTLLHGRLPAAPPAAAAAAIASRIPALLRRLSSSPGDGQGGDEWGSSWSTGITKEHFDGSDAAVGRPVTSPSKPVSPELAAVRAMDEEDEIFRAMERDNREAKAYVDSWGDRMRETCELLKQVREPGSRGSYLKDSEKQEMYRLHKEDPETYTVERLAKDFRVMRQRVHAILWLKEMEEEEERKLGKPLDDSVEVLLDSCPEFFNSHDREFHVASLPYKPDFKVMPEGWDGTTRDPDEVLYEISMKEDQMLYEEFVQRLQFNKKKVAGEVKCHKYSRRRPDDGWTYMVEKLGVQSKRGSGGGWKFASLPDGSSRPLNDMEKMYVKRETPKRRRRIMAPFK</sequence>
<accession>A2WW22</accession>
<reference key="1">
    <citation type="journal article" date="2005" name="PLoS Biol.">
        <title>The genomes of Oryza sativa: a history of duplications.</title>
        <authorList>
            <person name="Yu J."/>
            <person name="Wang J."/>
            <person name="Lin W."/>
            <person name="Li S."/>
            <person name="Li H."/>
            <person name="Zhou J."/>
            <person name="Ni P."/>
            <person name="Dong W."/>
            <person name="Hu S."/>
            <person name="Zeng C."/>
            <person name="Zhang J."/>
            <person name="Zhang Y."/>
            <person name="Li R."/>
            <person name="Xu Z."/>
            <person name="Li S."/>
            <person name="Li X."/>
            <person name="Zheng H."/>
            <person name="Cong L."/>
            <person name="Lin L."/>
            <person name="Yin J."/>
            <person name="Geng J."/>
            <person name="Li G."/>
            <person name="Shi J."/>
            <person name="Liu J."/>
            <person name="Lv H."/>
            <person name="Li J."/>
            <person name="Wang J."/>
            <person name="Deng Y."/>
            <person name="Ran L."/>
            <person name="Shi X."/>
            <person name="Wang X."/>
            <person name="Wu Q."/>
            <person name="Li C."/>
            <person name="Ren X."/>
            <person name="Wang J."/>
            <person name="Wang X."/>
            <person name="Li D."/>
            <person name="Liu D."/>
            <person name="Zhang X."/>
            <person name="Ji Z."/>
            <person name="Zhao W."/>
            <person name="Sun Y."/>
            <person name="Zhang Z."/>
            <person name="Bao J."/>
            <person name="Han Y."/>
            <person name="Dong L."/>
            <person name="Ji J."/>
            <person name="Chen P."/>
            <person name="Wu S."/>
            <person name="Liu J."/>
            <person name="Xiao Y."/>
            <person name="Bu D."/>
            <person name="Tan J."/>
            <person name="Yang L."/>
            <person name="Ye C."/>
            <person name="Zhang J."/>
            <person name="Xu J."/>
            <person name="Zhou Y."/>
            <person name="Yu Y."/>
            <person name="Zhang B."/>
            <person name="Zhuang S."/>
            <person name="Wei H."/>
            <person name="Liu B."/>
            <person name="Lei M."/>
            <person name="Yu H."/>
            <person name="Li Y."/>
            <person name="Xu H."/>
            <person name="Wei S."/>
            <person name="He X."/>
            <person name="Fang L."/>
            <person name="Zhang Z."/>
            <person name="Zhang Y."/>
            <person name="Huang X."/>
            <person name="Su Z."/>
            <person name="Tong W."/>
            <person name="Li J."/>
            <person name="Tong Z."/>
            <person name="Li S."/>
            <person name="Ye J."/>
            <person name="Wang L."/>
            <person name="Fang L."/>
            <person name="Lei T."/>
            <person name="Chen C.-S."/>
            <person name="Chen H.-C."/>
            <person name="Xu Z."/>
            <person name="Li H."/>
            <person name="Huang H."/>
            <person name="Zhang F."/>
            <person name="Xu H."/>
            <person name="Li N."/>
            <person name="Zhao C."/>
            <person name="Li S."/>
            <person name="Dong L."/>
            <person name="Huang Y."/>
            <person name="Li L."/>
            <person name="Xi Y."/>
            <person name="Qi Q."/>
            <person name="Li W."/>
            <person name="Zhang B."/>
            <person name="Hu W."/>
            <person name="Zhang Y."/>
            <person name="Tian X."/>
            <person name="Jiao Y."/>
            <person name="Liang X."/>
            <person name="Jin J."/>
            <person name="Gao L."/>
            <person name="Zheng W."/>
            <person name="Hao B."/>
            <person name="Liu S.-M."/>
            <person name="Wang W."/>
            <person name="Yuan L."/>
            <person name="Cao M."/>
            <person name="McDermott J."/>
            <person name="Samudrala R."/>
            <person name="Wang J."/>
            <person name="Wong G.K.-S."/>
            <person name="Yang H."/>
        </authorList>
    </citation>
    <scope>NUCLEOTIDE SEQUENCE [LARGE SCALE GENOMIC DNA]</scope>
    <source>
        <strain>cv. 93-11</strain>
    </source>
</reference>
<feature type="transit peptide" description="Mitochondrion" evidence="3">
    <location>
        <begin position="1"/>
        <end position="43"/>
    </location>
</feature>
<feature type="chain" id="PRO_0000450246" description="Protein GAMETE CELL DEFECTIVE 1, mitochondrial" evidence="3">
    <location>
        <begin position="44"/>
        <end position="345"/>
    </location>
</feature>
<feature type="region of interest" description="Disordered" evidence="4">
    <location>
        <begin position="36"/>
        <end position="82"/>
    </location>
</feature>
<comment type="function">
    <text evidence="1 2">Essential for fertility (male and female gametophyte functions and development) (By similarity). Required for the integrity of female gametic mitochondria (By similarity). Involved in embryo apical-basal patterning, and particularly dorsal-ventral patterning, during early embryogenesis, and endosperm free nucleus positioning and development as well as early endosperm development, probably by modulating the expression pattern of related genes (e.g. AL1, MYB3/AL2, CYP78A13/GE, PNH1, HAZ1, MPK6 and OSH1) (By similarity). Has function in triggering of endosperm programmed cell death (PCD) leading to syncytial endosperm cellularization and starchy endosperm cell maturation (By similarity). Implicated in central vacuole dynamics necessary for microspore development leading to pollen production, and for pollen development and germination (By similarity).</text>
</comment>
<comment type="subcellular location">
    <subcellularLocation>
        <location evidence="1">Mitochondrion</location>
    </subcellularLocation>
</comment>
<dbReference type="EMBL" id="CM000126">
    <property type="protein sequence ID" value="EAY76168.1"/>
    <property type="molecule type" value="Genomic_DNA"/>
</dbReference>
<dbReference type="SMR" id="A2WW22"/>
<dbReference type="STRING" id="39946.A2WW22"/>
<dbReference type="EnsemblPlants" id="BGIOSGA000641-TA">
    <property type="protein sequence ID" value="BGIOSGA000641-PA"/>
    <property type="gene ID" value="BGIOSGA000641"/>
</dbReference>
<dbReference type="EnsemblPlants" id="OsGoSa_01g0036110.01">
    <property type="protein sequence ID" value="OsGoSa_01g0036110.01"/>
    <property type="gene ID" value="OsGoSa_01g0036110"/>
</dbReference>
<dbReference type="EnsemblPlants" id="OsLaMu_01g0035970.01">
    <property type="protein sequence ID" value="OsLaMu_01g0035970.01"/>
    <property type="gene ID" value="OsLaMu_01g0035970"/>
</dbReference>
<dbReference type="EnsemblPlants" id="OsLima_01g0035810.01">
    <property type="protein sequence ID" value="OsLima_01g0035810.01"/>
    <property type="gene ID" value="OsLima_01g0035810"/>
</dbReference>
<dbReference type="Gramene" id="BGIOSGA000641-TA">
    <property type="protein sequence ID" value="BGIOSGA000641-PA"/>
    <property type="gene ID" value="BGIOSGA000641"/>
</dbReference>
<dbReference type="Gramene" id="OsGoSa_01g0036110.01">
    <property type="protein sequence ID" value="OsGoSa_01g0036110.01"/>
    <property type="gene ID" value="OsGoSa_01g0036110"/>
</dbReference>
<dbReference type="Gramene" id="OsLaMu_01g0035970.01">
    <property type="protein sequence ID" value="OsLaMu_01g0035970.01"/>
    <property type="gene ID" value="OsLaMu_01g0035970"/>
</dbReference>
<dbReference type="Gramene" id="OsLima_01g0035810.01">
    <property type="protein sequence ID" value="OsLima_01g0035810.01"/>
    <property type="gene ID" value="OsLima_01g0035810"/>
</dbReference>
<dbReference type="HOGENOM" id="CLU_058322_0_0_1"/>
<dbReference type="OMA" id="DACPEFF"/>
<dbReference type="OrthoDB" id="1919613at2759"/>
<dbReference type="Proteomes" id="UP000007015">
    <property type="component" value="Chromosome 1"/>
</dbReference>
<dbReference type="GO" id="GO:0005739">
    <property type="term" value="C:mitochondrion"/>
    <property type="evidence" value="ECO:0000250"/>
    <property type="project" value="UniProtKB"/>
</dbReference>
<dbReference type="GO" id="GO:0007154">
    <property type="term" value="P:cell communication"/>
    <property type="evidence" value="ECO:0007669"/>
    <property type="project" value="EnsemblPlants"/>
</dbReference>
<dbReference type="GO" id="GO:0009793">
    <property type="term" value="P:embryo development ending in seed dormancy"/>
    <property type="evidence" value="ECO:0000250"/>
    <property type="project" value="UniProtKB"/>
</dbReference>
<dbReference type="GO" id="GO:0010342">
    <property type="term" value="P:endosperm cellularization"/>
    <property type="evidence" value="ECO:0007669"/>
    <property type="project" value="EnsemblPlants"/>
</dbReference>
<dbReference type="GO" id="GO:0009960">
    <property type="term" value="P:endosperm development"/>
    <property type="evidence" value="ECO:0000250"/>
    <property type="project" value="UniProtKB"/>
</dbReference>
<dbReference type="GO" id="GO:0048229">
    <property type="term" value="P:gametophyte development"/>
    <property type="evidence" value="ECO:0000250"/>
    <property type="project" value="UniProtKB"/>
</dbReference>
<dbReference type="GO" id="GO:0007006">
    <property type="term" value="P:mitochondrial membrane organization"/>
    <property type="evidence" value="ECO:0007669"/>
    <property type="project" value="EnsemblPlants"/>
</dbReference>
<dbReference type="GO" id="GO:0051647">
    <property type="term" value="P:nucleus localization"/>
    <property type="evidence" value="ECO:0000250"/>
    <property type="project" value="UniProtKB"/>
</dbReference>
<dbReference type="GO" id="GO:0009555">
    <property type="term" value="P:pollen development"/>
    <property type="evidence" value="ECO:0000250"/>
    <property type="project" value="UniProtKB"/>
</dbReference>
<dbReference type="GO" id="GO:0009846">
    <property type="term" value="P:pollen germination"/>
    <property type="evidence" value="ECO:0000250"/>
    <property type="project" value="UniProtKB"/>
</dbReference>
<dbReference type="GO" id="GO:0048868">
    <property type="term" value="P:pollen tube development"/>
    <property type="evidence" value="ECO:0007669"/>
    <property type="project" value="EnsemblPlants"/>
</dbReference>
<dbReference type="GO" id="GO:0010468">
    <property type="term" value="P:regulation of gene expression"/>
    <property type="evidence" value="ECO:0000250"/>
    <property type="project" value="UniProtKB"/>
</dbReference>
<dbReference type="GO" id="GO:0043067">
    <property type="term" value="P:regulation of programmed cell death"/>
    <property type="evidence" value="ECO:0000250"/>
    <property type="project" value="UniProtKB"/>
</dbReference>
<dbReference type="GO" id="GO:0010581">
    <property type="term" value="P:regulation of starch biosynthetic process"/>
    <property type="evidence" value="ECO:0000250"/>
    <property type="project" value="UniProtKB"/>
</dbReference>
<dbReference type="GO" id="GO:0007033">
    <property type="term" value="P:vacuole organization"/>
    <property type="evidence" value="ECO:0000250"/>
    <property type="project" value="UniProtKB"/>
</dbReference>
<dbReference type="InterPro" id="IPR052851">
    <property type="entry name" value="GCD1_mitochondrial"/>
</dbReference>
<dbReference type="PANTHER" id="PTHR35476">
    <property type="entry name" value="MUCIN-LIKE PROTEIN"/>
    <property type="match status" value="1"/>
</dbReference>
<dbReference type="PANTHER" id="PTHR35476:SF3">
    <property type="entry name" value="SMALL RIBOSOMAL SUBUNIT PROTEIN MS75"/>
    <property type="match status" value="1"/>
</dbReference>
<dbReference type="Pfam" id="PF12824">
    <property type="entry name" value="MRP-L20"/>
    <property type="match status" value="1"/>
</dbReference>
<organism>
    <name type="scientific">Oryza sativa subsp. indica</name>
    <name type="common">Rice</name>
    <dbReference type="NCBI Taxonomy" id="39946"/>
    <lineage>
        <taxon>Eukaryota</taxon>
        <taxon>Viridiplantae</taxon>
        <taxon>Streptophyta</taxon>
        <taxon>Embryophyta</taxon>
        <taxon>Tracheophyta</taxon>
        <taxon>Spermatophyta</taxon>
        <taxon>Magnoliopsida</taxon>
        <taxon>Liliopsida</taxon>
        <taxon>Poales</taxon>
        <taxon>Poaceae</taxon>
        <taxon>BOP clade</taxon>
        <taxon>Oryzoideae</taxon>
        <taxon>Oryzeae</taxon>
        <taxon>Oryzinae</taxon>
        <taxon>Oryza</taxon>
        <taxon>Oryza sativa</taxon>
    </lineage>
</organism>